<organism evidence="7">
    <name type="scientific">Ixodes ricinus</name>
    <name type="common">Common tick</name>
    <name type="synonym">Acarus ricinus</name>
    <dbReference type="NCBI Taxonomy" id="34613"/>
    <lineage>
        <taxon>Eukaryota</taxon>
        <taxon>Metazoa</taxon>
        <taxon>Ecdysozoa</taxon>
        <taxon>Arthropoda</taxon>
        <taxon>Chelicerata</taxon>
        <taxon>Arachnida</taxon>
        <taxon>Acari</taxon>
        <taxon>Parasitiformes</taxon>
        <taxon>Ixodida</taxon>
        <taxon>Ixodoidea</taxon>
        <taxon>Ixodidae</taxon>
        <taxon>Ixodinae</taxon>
        <taxon>Ixodes</taxon>
    </lineage>
</organism>
<dbReference type="EMBL" id="GADI01007419">
    <property type="protein sequence ID" value="JAA66389.1"/>
    <property type="molecule type" value="mRNA"/>
</dbReference>
<dbReference type="SMR" id="A0A0K8R7D4"/>
<dbReference type="GO" id="GO:0005576">
    <property type="term" value="C:extracellular region"/>
    <property type="evidence" value="ECO:0007669"/>
    <property type="project" value="UniProtKB-SubCell"/>
</dbReference>
<dbReference type="GO" id="GO:0019958">
    <property type="term" value="F:C-X-C chemokine binding"/>
    <property type="evidence" value="ECO:0000314"/>
    <property type="project" value="UniProtKB"/>
</dbReference>
<sequence length="90" mass="9292">MEVKTFAFLQIAVLIAFSLHSASAGSKQPGAAGSSSDSVEAVFCPTNCTKGTNGAWSGCSDDCICVHVGENTEGSCMKFSGDYDYPTPEA</sequence>
<accession>A0A0K8R7D4</accession>
<proteinExistence type="inferred from homology"/>
<keyword id="KW-1015">Disulfide bond</keyword>
<keyword id="KW-0325">Glycoprotein</keyword>
<keyword id="KW-0964">Secreted</keyword>
<keyword id="KW-0732">Signal</keyword>
<reference evidence="7" key="1">
    <citation type="journal article" date="2013" name="FASEB J.">
        <title>De novo Ixodes ricinus salivary gland transcriptome analysis using two next-generation sequencing methodologies.</title>
        <authorList>
            <person name="Schwarz A."/>
            <person name="von Reumont B.M."/>
            <person name="Erhart J."/>
            <person name="Chagas A.C."/>
            <person name="Ribeiro J.M."/>
            <person name="Kotsyfakis M."/>
        </authorList>
    </citation>
    <scope>NUCLEOTIDE SEQUENCE [LARGE SCALE MRNA]</scope>
    <source>
        <tissue evidence="7">Salivary gland</tissue>
    </source>
</reference>
<reference evidence="6" key="2">
    <citation type="journal article" date="2019" name="J. Biol. Chem.">
        <title>A knottin scaffold directs the CXC-chemokine-binding specificity of tick evasins.</title>
        <authorList>
            <person name="Lee A.W."/>
            <person name="Deruaz M."/>
            <person name="Lynch C."/>
            <person name="Davies G."/>
            <person name="Singh K."/>
            <person name="Alenazi Y."/>
            <person name="Eaton J.R.O."/>
            <person name="Kawamura A."/>
            <person name="Shaw J."/>
            <person name="Proudfoot A.E.I."/>
            <person name="Dias J.M."/>
            <person name="Bhattacharya S."/>
        </authorList>
    </citation>
    <scope>FUNCTION</scope>
</reference>
<evidence type="ECO:0000250" key="1">
    <source>
        <dbReference type="UniProtKB" id="P0C8E8"/>
    </source>
</evidence>
<evidence type="ECO:0000255" key="2"/>
<evidence type="ECO:0000255" key="3">
    <source>
        <dbReference type="PROSITE-ProRule" id="PRU00498"/>
    </source>
</evidence>
<evidence type="ECO:0000269" key="4">
    <source>
    </source>
</evidence>
<evidence type="ECO:0000303" key="5">
    <source>
    </source>
</evidence>
<evidence type="ECO:0000305" key="6"/>
<evidence type="ECO:0000312" key="7">
    <source>
        <dbReference type="EMBL" id="JAA66389.1"/>
    </source>
</evidence>
<name>EV458_IXORI</name>
<feature type="signal peptide" evidence="2">
    <location>
        <begin position="1"/>
        <end position="24"/>
    </location>
</feature>
<feature type="chain" id="PRO_5005516017" description="Evasin P458" evidence="2">
    <location>
        <begin position="25"/>
        <end position="90"/>
    </location>
</feature>
<feature type="glycosylation site" description="N-linked (GlcNAc...) asparagine" evidence="3">
    <location>
        <position position="47"/>
    </location>
</feature>
<feature type="disulfide bond" evidence="1">
    <location>
        <begin position="44"/>
        <end position="63"/>
    </location>
</feature>
<feature type="disulfide bond" evidence="1">
    <location>
        <begin position="48"/>
        <end position="65"/>
    </location>
</feature>
<feature type="disulfide bond" evidence="1">
    <location>
        <begin position="59"/>
        <end position="76"/>
    </location>
</feature>
<protein>
    <recommendedName>
        <fullName evidence="5">Evasin P458</fullName>
    </recommendedName>
</protein>
<comment type="function">
    <text evidence="4">Salivary chemokine-binding protein which binds to host chemokines CXCL1, CXCL2, CXCL3, CXCL5, CXCL6 and CXCL13.</text>
</comment>
<comment type="subcellular location">
    <subcellularLocation>
        <location evidence="6">Secreted</location>
    </subcellularLocation>
</comment>